<accession>O74437</accession>
<organism>
    <name type="scientific">Schizosaccharomyces pombe (strain 972 / ATCC 24843)</name>
    <name type="common">Fission yeast</name>
    <dbReference type="NCBI Taxonomy" id="284812"/>
    <lineage>
        <taxon>Eukaryota</taxon>
        <taxon>Fungi</taxon>
        <taxon>Dikarya</taxon>
        <taxon>Ascomycota</taxon>
        <taxon>Taphrinomycotina</taxon>
        <taxon>Schizosaccharomycetes</taxon>
        <taxon>Schizosaccharomycetales</taxon>
        <taxon>Schizosaccharomycetaceae</taxon>
        <taxon>Schizosaccharomyces</taxon>
    </lineage>
</organism>
<dbReference type="EMBL" id="CU329672">
    <property type="protein sequence ID" value="CAA20672.1"/>
    <property type="molecule type" value="Genomic_DNA"/>
</dbReference>
<dbReference type="PIR" id="T41063">
    <property type="entry name" value="T41063"/>
</dbReference>
<dbReference type="RefSeq" id="NP_587799.1">
    <property type="nucleotide sequence ID" value="NM_001022792.2"/>
</dbReference>
<dbReference type="SMR" id="O74437"/>
<dbReference type="BioGRID" id="275700">
    <property type="interactions" value="13"/>
</dbReference>
<dbReference type="PaxDb" id="4896-SPCC1682.06.1"/>
<dbReference type="EnsemblFungi" id="SPCC1682.06.1">
    <property type="protein sequence ID" value="SPCC1682.06.1:pep"/>
    <property type="gene ID" value="SPCC1682.06"/>
</dbReference>
<dbReference type="KEGG" id="spo:2539128"/>
<dbReference type="PomBase" id="SPCC1682.06"/>
<dbReference type="VEuPathDB" id="FungiDB:SPCC1682.06"/>
<dbReference type="HOGENOM" id="CLU_1166429_0_0_1"/>
<dbReference type="InParanoid" id="O74437"/>
<dbReference type="PRO" id="PR:O74437"/>
<dbReference type="Proteomes" id="UP000002485">
    <property type="component" value="Chromosome III"/>
</dbReference>
<dbReference type="GO" id="GO:0016020">
    <property type="term" value="C:membrane"/>
    <property type="evidence" value="ECO:0007669"/>
    <property type="project" value="UniProtKB-SubCell"/>
</dbReference>
<keyword id="KW-0472">Membrane</keyword>
<keyword id="KW-1185">Reference proteome</keyword>
<keyword id="KW-0812">Transmembrane</keyword>
<keyword id="KW-1133">Transmembrane helix</keyword>
<comment type="subcellular location">
    <subcellularLocation>
        <location evidence="3">Membrane</location>
        <topology evidence="3">Multi-pass membrane protein</topology>
    </subcellularLocation>
</comment>
<name>YJE6_SCHPO</name>
<proteinExistence type="predicted"/>
<protein>
    <recommendedName>
        <fullName>Uncharacterized membrane protein C1682.06</fullName>
    </recommendedName>
</protein>
<evidence type="ECO:0000255" key="1"/>
<evidence type="ECO:0000256" key="2">
    <source>
        <dbReference type="SAM" id="MobiDB-lite"/>
    </source>
</evidence>
<evidence type="ECO:0000305" key="3"/>
<gene>
    <name type="ORF">SPCC1682.06</name>
</gene>
<feature type="chain" id="PRO_0000304079" description="Uncharacterized membrane protein C1682.06">
    <location>
        <begin position="1"/>
        <end position="238"/>
    </location>
</feature>
<feature type="transmembrane region" description="Helical" evidence="1">
    <location>
        <begin position="75"/>
        <end position="95"/>
    </location>
</feature>
<feature type="transmembrane region" description="Helical" evidence="1">
    <location>
        <begin position="116"/>
        <end position="136"/>
    </location>
</feature>
<feature type="transmembrane region" description="Helical" evidence="1">
    <location>
        <begin position="172"/>
        <end position="192"/>
    </location>
</feature>
<feature type="region of interest" description="Disordered" evidence="2">
    <location>
        <begin position="200"/>
        <end position="238"/>
    </location>
</feature>
<feature type="compositionally biased region" description="Polar residues" evidence="2">
    <location>
        <begin position="206"/>
        <end position="220"/>
    </location>
</feature>
<feature type="compositionally biased region" description="Basic and acidic residues" evidence="2">
    <location>
        <begin position="229"/>
        <end position="238"/>
    </location>
</feature>
<sequence>MPDEKLPQYNEVWNDLEKGCLHSCPSYSVNNHVNNPIVKQNSTLTQPSLRKKNTMAAPARLRKRSENVRLTQARYAIFHIFLPFILTLLLYHNFYNYFDQALADLNSVVKYVIETIVLIFTYVMTVIIVYFSFSLIKLAFEEAYVYAPSVAKANEGLAKAIAGLAKYVAKAIQGLAHIILSLLLFILGLEVIEQDEETGDVEMSSMRGQAITTEPASDNTMAEETDCNTSKDVESGSN</sequence>
<reference key="1">
    <citation type="journal article" date="2002" name="Nature">
        <title>The genome sequence of Schizosaccharomyces pombe.</title>
        <authorList>
            <person name="Wood V."/>
            <person name="Gwilliam R."/>
            <person name="Rajandream M.A."/>
            <person name="Lyne M.H."/>
            <person name="Lyne R."/>
            <person name="Stewart A."/>
            <person name="Sgouros J.G."/>
            <person name="Peat N."/>
            <person name="Hayles J."/>
            <person name="Baker S.G."/>
            <person name="Basham D."/>
            <person name="Bowman S."/>
            <person name="Brooks K."/>
            <person name="Brown D."/>
            <person name="Brown S."/>
            <person name="Chillingworth T."/>
            <person name="Churcher C.M."/>
            <person name="Collins M."/>
            <person name="Connor R."/>
            <person name="Cronin A."/>
            <person name="Davis P."/>
            <person name="Feltwell T."/>
            <person name="Fraser A."/>
            <person name="Gentles S."/>
            <person name="Goble A."/>
            <person name="Hamlin N."/>
            <person name="Harris D.E."/>
            <person name="Hidalgo J."/>
            <person name="Hodgson G."/>
            <person name="Holroyd S."/>
            <person name="Hornsby T."/>
            <person name="Howarth S."/>
            <person name="Huckle E.J."/>
            <person name="Hunt S."/>
            <person name="Jagels K."/>
            <person name="James K.D."/>
            <person name="Jones L."/>
            <person name="Jones M."/>
            <person name="Leather S."/>
            <person name="McDonald S."/>
            <person name="McLean J."/>
            <person name="Mooney P."/>
            <person name="Moule S."/>
            <person name="Mungall K.L."/>
            <person name="Murphy L.D."/>
            <person name="Niblett D."/>
            <person name="Odell C."/>
            <person name="Oliver K."/>
            <person name="O'Neil S."/>
            <person name="Pearson D."/>
            <person name="Quail M.A."/>
            <person name="Rabbinowitsch E."/>
            <person name="Rutherford K.M."/>
            <person name="Rutter S."/>
            <person name="Saunders D."/>
            <person name="Seeger K."/>
            <person name="Sharp S."/>
            <person name="Skelton J."/>
            <person name="Simmonds M.N."/>
            <person name="Squares R."/>
            <person name="Squares S."/>
            <person name="Stevens K."/>
            <person name="Taylor K."/>
            <person name="Taylor R.G."/>
            <person name="Tivey A."/>
            <person name="Walsh S.V."/>
            <person name="Warren T."/>
            <person name="Whitehead S."/>
            <person name="Woodward J.R."/>
            <person name="Volckaert G."/>
            <person name="Aert R."/>
            <person name="Robben J."/>
            <person name="Grymonprez B."/>
            <person name="Weltjens I."/>
            <person name="Vanstreels E."/>
            <person name="Rieger M."/>
            <person name="Schaefer M."/>
            <person name="Mueller-Auer S."/>
            <person name="Gabel C."/>
            <person name="Fuchs M."/>
            <person name="Duesterhoeft A."/>
            <person name="Fritzc C."/>
            <person name="Holzer E."/>
            <person name="Moestl D."/>
            <person name="Hilbert H."/>
            <person name="Borzym K."/>
            <person name="Langer I."/>
            <person name="Beck A."/>
            <person name="Lehrach H."/>
            <person name="Reinhardt R."/>
            <person name="Pohl T.M."/>
            <person name="Eger P."/>
            <person name="Zimmermann W."/>
            <person name="Wedler H."/>
            <person name="Wambutt R."/>
            <person name="Purnelle B."/>
            <person name="Goffeau A."/>
            <person name="Cadieu E."/>
            <person name="Dreano S."/>
            <person name="Gloux S."/>
            <person name="Lelaure V."/>
            <person name="Mottier S."/>
            <person name="Galibert F."/>
            <person name="Aves S.J."/>
            <person name="Xiang Z."/>
            <person name="Hunt C."/>
            <person name="Moore K."/>
            <person name="Hurst S.M."/>
            <person name="Lucas M."/>
            <person name="Rochet M."/>
            <person name="Gaillardin C."/>
            <person name="Tallada V.A."/>
            <person name="Garzon A."/>
            <person name="Thode G."/>
            <person name="Daga R.R."/>
            <person name="Cruzado L."/>
            <person name="Jimenez J."/>
            <person name="Sanchez M."/>
            <person name="del Rey F."/>
            <person name="Benito J."/>
            <person name="Dominguez A."/>
            <person name="Revuelta J.L."/>
            <person name="Moreno S."/>
            <person name="Armstrong J."/>
            <person name="Forsburg S.L."/>
            <person name="Cerutti L."/>
            <person name="Lowe T."/>
            <person name="McCombie W.R."/>
            <person name="Paulsen I."/>
            <person name="Potashkin J."/>
            <person name="Shpakovski G.V."/>
            <person name="Ussery D."/>
            <person name="Barrell B.G."/>
            <person name="Nurse P."/>
        </authorList>
    </citation>
    <scope>NUCLEOTIDE SEQUENCE [LARGE SCALE GENOMIC DNA]</scope>
    <source>
        <strain>972 / ATCC 24843</strain>
    </source>
</reference>